<gene>
    <name type="primary">SWR1</name>
    <name type="ordered locus">CAGL0M01188g</name>
</gene>
<keyword id="KW-0010">Activator</keyword>
<keyword id="KW-0067">ATP-binding</keyword>
<keyword id="KW-0156">Chromatin regulator</keyword>
<keyword id="KW-0238">DNA-binding</keyword>
<keyword id="KW-0347">Helicase</keyword>
<keyword id="KW-0378">Hydrolase</keyword>
<keyword id="KW-0547">Nucleotide-binding</keyword>
<keyword id="KW-0539">Nucleus</keyword>
<keyword id="KW-1185">Reference proteome</keyword>
<keyword id="KW-0804">Transcription</keyword>
<keyword id="KW-0805">Transcription regulation</keyword>
<evidence type="ECO:0000250" key="1"/>
<evidence type="ECO:0000255" key="2">
    <source>
        <dbReference type="PROSITE-ProRule" id="PRU00541"/>
    </source>
</evidence>
<evidence type="ECO:0000255" key="3">
    <source>
        <dbReference type="PROSITE-ProRule" id="PRU00542"/>
    </source>
</evidence>
<evidence type="ECO:0000255" key="4">
    <source>
        <dbReference type="PROSITE-ProRule" id="PRU00549"/>
    </source>
</evidence>
<evidence type="ECO:0000256" key="5">
    <source>
        <dbReference type="SAM" id="MobiDB-lite"/>
    </source>
</evidence>
<evidence type="ECO:0000305" key="6"/>
<proteinExistence type="inferred from homology"/>
<feature type="chain" id="PRO_0000074365" description="Helicase SWR1">
    <location>
        <begin position="1"/>
        <end position="1450"/>
    </location>
</feature>
<feature type="domain" description="HSA" evidence="4">
    <location>
        <begin position="344"/>
        <end position="417"/>
    </location>
</feature>
<feature type="domain" description="Helicase ATP-binding" evidence="2">
    <location>
        <begin position="640"/>
        <end position="805"/>
    </location>
</feature>
<feature type="domain" description="Helicase C-terminal" evidence="3">
    <location>
        <begin position="1179"/>
        <end position="1332"/>
    </location>
</feature>
<feature type="region of interest" description="Disordered" evidence="5">
    <location>
        <begin position="469"/>
        <end position="618"/>
    </location>
</feature>
<feature type="region of interest" description="Disordered" evidence="5">
    <location>
        <begin position="1400"/>
        <end position="1424"/>
    </location>
</feature>
<feature type="short sequence motif" description="DEAH box">
    <location>
        <begin position="756"/>
        <end position="759"/>
    </location>
</feature>
<feature type="compositionally biased region" description="Low complexity" evidence="5">
    <location>
        <begin position="480"/>
        <end position="497"/>
    </location>
</feature>
<feature type="compositionally biased region" description="Acidic residues" evidence="5">
    <location>
        <begin position="498"/>
        <end position="510"/>
    </location>
</feature>
<feature type="compositionally biased region" description="Low complexity" evidence="5">
    <location>
        <begin position="523"/>
        <end position="540"/>
    </location>
</feature>
<feature type="compositionally biased region" description="Low complexity" evidence="5">
    <location>
        <begin position="549"/>
        <end position="560"/>
    </location>
</feature>
<feature type="compositionally biased region" description="Acidic residues" evidence="5">
    <location>
        <begin position="578"/>
        <end position="588"/>
    </location>
</feature>
<feature type="compositionally biased region" description="Basic and acidic residues" evidence="5">
    <location>
        <begin position="589"/>
        <end position="602"/>
    </location>
</feature>
<feature type="binding site" evidence="2">
    <location>
        <begin position="653"/>
        <end position="700"/>
    </location>
    <ligand>
        <name>ATP</name>
        <dbReference type="ChEBI" id="CHEBI:30616"/>
    </ligand>
</feature>
<accession>Q6FK48</accession>
<protein>
    <recommendedName>
        <fullName>Helicase SWR1</fullName>
        <ecNumber>3.6.4.12</ecNumber>
    </recommendedName>
</protein>
<name>SWR1_CANGA</name>
<organism>
    <name type="scientific">Candida glabrata (strain ATCC 2001 / BCRC 20586 / JCM 3761 / NBRC 0622 / NRRL Y-65 / CBS 138)</name>
    <name type="common">Yeast</name>
    <name type="synonym">Nakaseomyces glabratus</name>
    <dbReference type="NCBI Taxonomy" id="284593"/>
    <lineage>
        <taxon>Eukaryota</taxon>
        <taxon>Fungi</taxon>
        <taxon>Dikarya</taxon>
        <taxon>Ascomycota</taxon>
        <taxon>Saccharomycotina</taxon>
        <taxon>Saccharomycetes</taxon>
        <taxon>Saccharomycetales</taxon>
        <taxon>Saccharomycetaceae</taxon>
        <taxon>Nakaseomyces</taxon>
    </lineage>
</organism>
<sequence length="1450" mass="167290">MSKNNKLNGKDNRQSKIEKLSELKLRHDQLTNELYHLHEYISLVEYDPFYIPNSENYERLLEEKDVTWGSIFQEKKQLHNESSGKKVRRSVRHLRDSGSSTINELDTMSENDINLLKEVDILAKQKLQDLKLQFSNSHIKKKGNTKRAKIVKQVPNHQDKSESPQISERDVKTVVKDLKPNHRGSEIKPEIMESSDVKNEIENCDFNEKQLKLYKDDDIASESDFYFTTSSEDELPNKRRGTIKRRKRINLYVNPPKAVITNPDNIANSHYPTLHEYLDSFKILEDDMTNEEYNTFIKEQQRFAKMIKKGIETGALKYDPVTETVQPSARKVPNMFSHAKVDPIQYMYKEQNLHIHQEHLINQGLFSSKLVQNRKKQRIAGAKKIAQMIEQHFKHIAGAEDRRLKENEKQRKAIARNIIQSVKKRWNLAEKAYRILKKDEEEQLKRIQGKEHLSKMLEKSSKLLGAQLKQHPNEDDIENSTSDDFSSTGDSDNLSSSSDEESDDEINDLSEDQKNNINELKTSSTSAFSSPEISSPSKNPDLGLNSLLTNDFENESNSSDTNEEFIMGDSDTSHSDDENLTDDSEDSNDGEHDTTSDNEKSDLFPADTTNDPLAVQDVPTPSLLRGTLRTYQKQGLNWLASLYNNNTNGILADEMGLGKTIQTISLLSYLACEKHNWGPHLIVVPTSVLLNWEMEFKRFAPGFKVLTYYGNPQQRKEKRKGWNKPDAFHVCIVSYQLIVQDQHSFKRKKWQYMVLDEAHNIKNFRSTRWQALLNFNTQRRILLTGTPLQNNIAELWSLLYFLMPQTVIDGQKVSGFADLDAFQQWFGRPVDKLIETGGTYEQDNETKRTVEKLHQVLRPYLLRRLKADVEKQIPGKYEHIVYCKLSKRQRFLYDDFMSRAQTKATLASGNFMSIVNCLMQLRKVCNHPDLFEVRPIKTSFLFGESVIARYSERANSITRRIHFHDKDTLVDLQNINLQFTNNDLEKTSYHTNTINKLACINEFVEEVQKLRKQNAEEERQKSRHLKINTQNISNFYEEFMQQKLDEQENKINFIGYLNSQRCSRKTVYGMNLIRLLEMPHVSNNCIDDPNYDDLIKPLQTRLLDGRTTIEKFAVLTPGAVTSNIGELTLGMDEFVTPNSKSGIIPYEELVQLDNPFHQVQTKLTIAFPDKSLLQYDCGKLQKLAILLQQLKDGGHRALIFTQMTKVLDILEQFLNYHGYLYMRLDGATKIEDRQILTERFNSDPKITVFILSSRSGGLGINLTGADTVIFYDSDWNPAMDKQCQDRCHRIGQTRDVHIYRFVSEHTIESNILKKANQKRQLDDVIIQKGEFTTDYFSKLSVKDLFGSDVVGDLPVIDTKPLLGSDSEAIKDPKKLEKLLAQAEDEDDVKAANSALREVNVDDEDFDESSTNKTGGNILNGDDIDEDVDEYEGTNHVEEYMLRFIANGFYF</sequence>
<comment type="function">
    <text evidence="1">Catalytic component of the SWR1 complex which mediates the ATP-dependent exchange of histone H2A for the H2A variant HZT1 leading to transcriptional regulation of selected genes by chromatin remodeling.</text>
</comment>
<comment type="catalytic activity">
    <reaction>
        <text>ATP + H2O = ADP + phosphate + H(+)</text>
        <dbReference type="Rhea" id="RHEA:13065"/>
        <dbReference type="ChEBI" id="CHEBI:15377"/>
        <dbReference type="ChEBI" id="CHEBI:15378"/>
        <dbReference type="ChEBI" id="CHEBI:30616"/>
        <dbReference type="ChEBI" id="CHEBI:43474"/>
        <dbReference type="ChEBI" id="CHEBI:456216"/>
        <dbReference type="EC" id="3.6.4.12"/>
    </reaction>
</comment>
<comment type="subunit">
    <text evidence="1">Component of the SWR1 chromatin-remodeling complex.</text>
</comment>
<comment type="subcellular location">
    <subcellularLocation>
        <location evidence="4">Nucleus</location>
    </subcellularLocation>
</comment>
<comment type="similarity">
    <text evidence="6">Belongs to the SNF2/RAD54 helicase family. SWR1 subfamily.</text>
</comment>
<reference key="1">
    <citation type="journal article" date="2004" name="Nature">
        <title>Genome evolution in yeasts.</title>
        <authorList>
            <person name="Dujon B."/>
            <person name="Sherman D."/>
            <person name="Fischer G."/>
            <person name="Durrens P."/>
            <person name="Casaregola S."/>
            <person name="Lafontaine I."/>
            <person name="de Montigny J."/>
            <person name="Marck C."/>
            <person name="Neuveglise C."/>
            <person name="Talla E."/>
            <person name="Goffard N."/>
            <person name="Frangeul L."/>
            <person name="Aigle M."/>
            <person name="Anthouard V."/>
            <person name="Babour A."/>
            <person name="Barbe V."/>
            <person name="Barnay S."/>
            <person name="Blanchin S."/>
            <person name="Beckerich J.-M."/>
            <person name="Beyne E."/>
            <person name="Bleykasten C."/>
            <person name="Boisrame A."/>
            <person name="Boyer J."/>
            <person name="Cattolico L."/>
            <person name="Confanioleri F."/>
            <person name="de Daruvar A."/>
            <person name="Despons L."/>
            <person name="Fabre E."/>
            <person name="Fairhead C."/>
            <person name="Ferry-Dumazet H."/>
            <person name="Groppi A."/>
            <person name="Hantraye F."/>
            <person name="Hennequin C."/>
            <person name="Jauniaux N."/>
            <person name="Joyet P."/>
            <person name="Kachouri R."/>
            <person name="Kerrest A."/>
            <person name="Koszul R."/>
            <person name="Lemaire M."/>
            <person name="Lesur I."/>
            <person name="Ma L."/>
            <person name="Muller H."/>
            <person name="Nicaud J.-M."/>
            <person name="Nikolski M."/>
            <person name="Oztas S."/>
            <person name="Ozier-Kalogeropoulos O."/>
            <person name="Pellenz S."/>
            <person name="Potier S."/>
            <person name="Richard G.-F."/>
            <person name="Straub M.-L."/>
            <person name="Suleau A."/>
            <person name="Swennen D."/>
            <person name="Tekaia F."/>
            <person name="Wesolowski-Louvel M."/>
            <person name="Westhof E."/>
            <person name="Wirth B."/>
            <person name="Zeniou-Meyer M."/>
            <person name="Zivanovic Y."/>
            <person name="Bolotin-Fukuhara M."/>
            <person name="Thierry A."/>
            <person name="Bouchier C."/>
            <person name="Caudron B."/>
            <person name="Scarpelli C."/>
            <person name="Gaillardin C."/>
            <person name="Weissenbach J."/>
            <person name="Wincker P."/>
            <person name="Souciet J.-L."/>
        </authorList>
    </citation>
    <scope>NUCLEOTIDE SEQUENCE [LARGE SCALE GENOMIC DNA]</scope>
    <source>
        <strain>ATCC 2001 / BCRC 20586 / JCM 3761 / NBRC 0622 / NRRL Y-65 / CBS 138</strain>
    </source>
</reference>
<dbReference type="EC" id="3.6.4.12"/>
<dbReference type="EMBL" id="CR380959">
    <property type="protein sequence ID" value="CAG62372.1"/>
    <property type="molecule type" value="Genomic_DNA"/>
</dbReference>
<dbReference type="RefSeq" id="XP_449396.1">
    <property type="nucleotide sequence ID" value="XM_449396.1"/>
</dbReference>
<dbReference type="SMR" id="Q6FK48"/>
<dbReference type="FunCoup" id="Q6FK48">
    <property type="interactions" value="248"/>
</dbReference>
<dbReference type="STRING" id="284593.Q6FK48"/>
<dbReference type="EnsemblFungi" id="CAGL0M01188g-T">
    <property type="protein sequence ID" value="CAGL0M01188g-T-p1"/>
    <property type="gene ID" value="CAGL0M01188g"/>
</dbReference>
<dbReference type="KEGG" id="cgr:2891166"/>
<dbReference type="CGD" id="CAL0137511">
    <property type="gene designation" value="SWR1"/>
</dbReference>
<dbReference type="VEuPathDB" id="FungiDB:CAGL0M01188g"/>
<dbReference type="eggNOG" id="KOG0391">
    <property type="taxonomic scope" value="Eukaryota"/>
</dbReference>
<dbReference type="HOGENOM" id="CLU_000315_24_4_1"/>
<dbReference type="InParanoid" id="Q6FK48"/>
<dbReference type="OMA" id="AFQQWFG"/>
<dbReference type="Proteomes" id="UP000002428">
    <property type="component" value="Chromosome M"/>
</dbReference>
<dbReference type="GO" id="GO:0005829">
    <property type="term" value="C:cytosol"/>
    <property type="evidence" value="ECO:0007669"/>
    <property type="project" value="EnsemblFungi"/>
</dbReference>
<dbReference type="GO" id="GO:0000812">
    <property type="term" value="C:Swr1 complex"/>
    <property type="evidence" value="ECO:0007669"/>
    <property type="project" value="EnsemblFungi"/>
</dbReference>
<dbReference type="GO" id="GO:0005524">
    <property type="term" value="F:ATP binding"/>
    <property type="evidence" value="ECO:0007669"/>
    <property type="project" value="UniProtKB-KW"/>
</dbReference>
<dbReference type="GO" id="GO:0016887">
    <property type="term" value="F:ATP hydrolysis activity"/>
    <property type="evidence" value="ECO:0007669"/>
    <property type="project" value="TreeGrafter"/>
</dbReference>
<dbReference type="GO" id="GO:0003677">
    <property type="term" value="F:DNA binding"/>
    <property type="evidence" value="ECO:0007669"/>
    <property type="project" value="UniProtKB-KW"/>
</dbReference>
<dbReference type="GO" id="GO:0004386">
    <property type="term" value="F:helicase activity"/>
    <property type="evidence" value="ECO:0007669"/>
    <property type="project" value="UniProtKB-KW"/>
</dbReference>
<dbReference type="GO" id="GO:0042393">
    <property type="term" value="F:histone binding"/>
    <property type="evidence" value="ECO:0007669"/>
    <property type="project" value="TreeGrafter"/>
</dbReference>
<dbReference type="GO" id="GO:0005198">
    <property type="term" value="F:structural molecule activity"/>
    <property type="evidence" value="ECO:0007669"/>
    <property type="project" value="EnsemblFungi"/>
</dbReference>
<dbReference type="GO" id="GO:0006338">
    <property type="term" value="P:chromatin remodeling"/>
    <property type="evidence" value="ECO:0007669"/>
    <property type="project" value="EnsemblFungi"/>
</dbReference>
<dbReference type="GO" id="GO:0000725">
    <property type="term" value="P:recombinational repair"/>
    <property type="evidence" value="ECO:0007669"/>
    <property type="project" value="EnsemblFungi"/>
</dbReference>
<dbReference type="CDD" id="cd18003">
    <property type="entry name" value="DEXQc_SRCAP"/>
    <property type="match status" value="1"/>
</dbReference>
<dbReference type="CDD" id="cd18793">
    <property type="entry name" value="SF2_C_SNF"/>
    <property type="match status" value="1"/>
</dbReference>
<dbReference type="FunFam" id="3.40.50.10810:FF:000005">
    <property type="entry name" value="Photoperiod-independent early flowering 1"/>
    <property type="match status" value="1"/>
</dbReference>
<dbReference type="FunFam" id="3.40.50.300:FF:000655">
    <property type="entry name" value="Protein PHOTOPERIOD-INDEPENDENT EARLY FLOWERING 1"/>
    <property type="match status" value="1"/>
</dbReference>
<dbReference type="Gene3D" id="3.40.50.300">
    <property type="entry name" value="P-loop containing nucleotide triphosphate hydrolases"/>
    <property type="match status" value="1"/>
</dbReference>
<dbReference type="Gene3D" id="1.20.120.850">
    <property type="entry name" value="SWI2/SNF2 ATPases, N-terminal domain"/>
    <property type="match status" value="1"/>
</dbReference>
<dbReference type="Gene3D" id="3.40.50.10810">
    <property type="entry name" value="Tandem AAA-ATPase domain"/>
    <property type="match status" value="1"/>
</dbReference>
<dbReference type="InterPro" id="IPR014001">
    <property type="entry name" value="Helicase_ATP-bd"/>
</dbReference>
<dbReference type="InterPro" id="IPR001650">
    <property type="entry name" value="Helicase_C-like"/>
</dbReference>
<dbReference type="InterPro" id="IPR014012">
    <property type="entry name" value="HSA_dom"/>
</dbReference>
<dbReference type="InterPro" id="IPR050520">
    <property type="entry name" value="INO80/SWR1_helicase"/>
</dbReference>
<dbReference type="InterPro" id="IPR027417">
    <property type="entry name" value="P-loop_NTPase"/>
</dbReference>
<dbReference type="InterPro" id="IPR038718">
    <property type="entry name" value="SNF2-like_sf"/>
</dbReference>
<dbReference type="InterPro" id="IPR049730">
    <property type="entry name" value="SNF2/RAD54-like_C"/>
</dbReference>
<dbReference type="InterPro" id="IPR000330">
    <property type="entry name" value="SNF2_N"/>
</dbReference>
<dbReference type="PANTHER" id="PTHR45685:SF1">
    <property type="entry name" value="HELICASE SRCAP"/>
    <property type="match status" value="1"/>
</dbReference>
<dbReference type="PANTHER" id="PTHR45685">
    <property type="entry name" value="HELICASE SRCAP-RELATED"/>
    <property type="match status" value="1"/>
</dbReference>
<dbReference type="Pfam" id="PF00271">
    <property type="entry name" value="Helicase_C"/>
    <property type="match status" value="1"/>
</dbReference>
<dbReference type="Pfam" id="PF07529">
    <property type="entry name" value="HSA"/>
    <property type="match status" value="1"/>
</dbReference>
<dbReference type="Pfam" id="PF00176">
    <property type="entry name" value="SNF2-rel_dom"/>
    <property type="match status" value="1"/>
</dbReference>
<dbReference type="SMART" id="SM00487">
    <property type="entry name" value="DEXDc"/>
    <property type="match status" value="1"/>
</dbReference>
<dbReference type="SMART" id="SM00490">
    <property type="entry name" value="HELICc"/>
    <property type="match status" value="1"/>
</dbReference>
<dbReference type="SMART" id="SM00573">
    <property type="entry name" value="HSA"/>
    <property type="match status" value="1"/>
</dbReference>
<dbReference type="SUPFAM" id="SSF52540">
    <property type="entry name" value="P-loop containing nucleoside triphosphate hydrolases"/>
    <property type="match status" value="2"/>
</dbReference>
<dbReference type="PROSITE" id="PS51192">
    <property type="entry name" value="HELICASE_ATP_BIND_1"/>
    <property type="match status" value="1"/>
</dbReference>
<dbReference type="PROSITE" id="PS51194">
    <property type="entry name" value="HELICASE_CTER"/>
    <property type="match status" value="1"/>
</dbReference>
<dbReference type="PROSITE" id="PS51204">
    <property type="entry name" value="HSA"/>
    <property type="match status" value="1"/>
</dbReference>